<proteinExistence type="inferred from homology"/>
<organism>
    <name type="scientific">Salmonella typhimurium (strain LT2 / SGSC1412 / ATCC 700720)</name>
    <dbReference type="NCBI Taxonomy" id="99287"/>
    <lineage>
        <taxon>Bacteria</taxon>
        <taxon>Pseudomonadati</taxon>
        <taxon>Pseudomonadota</taxon>
        <taxon>Gammaproteobacteria</taxon>
        <taxon>Enterobacterales</taxon>
        <taxon>Enterobacteriaceae</taxon>
        <taxon>Salmonella</taxon>
    </lineage>
</organism>
<gene>
    <name evidence="1" type="primary">potA</name>
    <name type="ordered locus">STM1226</name>
</gene>
<dbReference type="EC" id="7.6.2.11" evidence="1"/>
<dbReference type="EMBL" id="AE006468">
    <property type="protein sequence ID" value="AAL20155.1"/>
    <property type="molecule type" value="Genomic_DNA"/>
</dbReference>
<dbReference type="EMBL" id="M62725">
    <property type="status" value="NOT_ANNOTATED_CDS"/>
    <property type="molecule type" value="Genomic_DNA"/>
</dbReference>
<dbReference type="RefSeq" id="NP_460196.1">
    <property type="nucleotide sequence ID" value="NC_003197.2"/>
</dbReference>
<dbReference type="RefSeq" id="WP_000531607.1">
    <property type="nucleotide sequence ID" value="NC_003197.2"/>
</dbReference>
<dbReference type="SMR" id="P40790"/>
<dbReference type="STRING" id="99287.STM1226"/>
<dbReference type="PaxDb" id="99287-STM1226"/>
<dbReference type="GeneID" id="1252744"/>
<dbReference type="KEGG" id="stm:STM1226"/>
<dbReference type="PATRIC" id="fig|99287.12.peg.1297"/>
<dbReference type="HOGENOM" id="CLU_000604_1_1_6"/>
<dbReference type="OMA" id="HVMRFGE"/>
<dbReference type="PhylomeDB" id="P40790"/>
<dbReference type="BioCyc" id="SENT99287:STM1226-MONOMER"/>
<dbReference type="Proteomes" id="UP000001014">
    <property type="component" value="Chromosome"/>
</dbReference>
<dbReference type="GO" id="GO:0043190">
    <property type="term" value="C:ATP-binding cassette (ABC) transporter complex"/>
    <property type="evidence" value="ECO:0007669"/>
    <property type="project" value="InterPro"/>
</dbReference>
<dbReference type="GO" id="GO:0015594">
    <property type="term" value="F:ABC-type putrescine transporter activity"/>
    <property type="evidence" value="ECO:0007669"/>
    <property type="project" value="InterPro"/>
</dbReference>
<dbReference type="GO" id="GO:0005524">
    <property type="term" value="F:ATP binding"/>
    <property type="evidence" value="ECO:0007669"/>
    <property type="project" value="UniProtKB-KW"/>
</dbReference>
<dbReference type="GO" id="GO:0016887">
    <property type="term" value="F:ATP hydrolysis activity"/>
    <property type="evidence" value="ECO:0007669"/>
    <property type="project" value="InterPro"/>
</dbReference>
<dbReference type="CDD" id="cd03300">
    <property type="entry name" value="ABC_PotA_N"/>
    <property type="match status" value="1"/>
</dbReference>
<dbReference type="FunFam" id="2.40.50.100:FF:000017">
    <property type="entry name" value="Spermidine/putrescine import ATP-binding protein PotA"/>
    <property type="match status" value="1"/>
</dbReference>
<dbReference type="FunFam" id="3.40.50.300:FF:000133">
    <property type="entry name" value="Spermidine/putrescine import ATP-binding protein PotA"/>
    <property type="match status" value="1"/>
</dbReference>
<dbReference type="Gene3D" id="2.40.50.100">
    <property type="match status" value="1"/>
</dbReference>
<dbReference type="Gene3D" id="3.40.50.300">
    <property type="entry name" value="P-loop containing nucleotide triphosphate hydrolases"/>
    <property type="match status" value="1"/>
</dbReference>
<dbReference type="InterPro" id="IPR003593">
    <property type="entry name" value="AAA+_ATPase"/>
</dbReference>
<dbReference type="InterPro" id="IPR050093">
    <property type="entry name" value="ABC_SmlMolc_Importer"/>
</dbReference>
<dbReference type="InterPro" id="IPR003439">
    <property type="entry name" value="ABC_transporter-like_ATP-bd"/>
</dbReference>
<dbReference type="InterPro" id="IPR017871">
    <property type="entry name" value="ABC_transporter-like_CS"/>
</dbReference>
<dbReference type="InterPro" id="IPR008995">
    <property type="entry name" value="Mo/tungstate-bd_C_term_dom"/>
</dbReference>
<dbReference type="InterPro" id="IPR027417">
    <property type="entry name" value="P-loop_NTPase"/>
</dbReference>
<dbReference type="InterPro" id="IPR005893">
    <property type="entry name" value="PotA-like"/>
</dbReference>
<dbReference type="InterPro" id="IPR017879">
    <property type="entry name" value="PotA_ATP-bd"/>
</dbReference>
<dbReference type="InterPro" id="IPR013611">
    <property type="entry name" value="Transp-assoc_OB_typ2"/>
</dbReference>
<dbReference type="NCBIfam" id="TIGR01187">
    <property type="entry name" value="potA"/>
    <property type="match status" value="1"/>
</dbReference>
<dbReference type="NCBIfam" id="NF006987">
    <property type="entry name" value="PRK09452.1"/>
    <property type="match status" value="1"/>
</dbReference>
<dbReference type="PANTHER" id="PTHR42781">
    <property type="entry name" value="SPERMIDINE/PUTRESCINE IMPORT ATP-BINDING PROTEIN POTA"/>
    <property type="match status" value="1"/>
</dbReference>
<dbReference type="PANTHER" id="PTHR42781:SF4">
    <property type="entry name" value="SPERMIDINE_PUTRESCINE IMPORT ATP-BINDING PROTEIN POTA"/>
    <property type="match status" value="1"/>
</dbReference>
<dbReference type="Pfam" id="PF00005">
    <property type="entry name" value="ABC_tran"/>
    <property type="match status" value="1"/>
</dbReference>
<dbReference type="Pfam" id="PF08402">
    <property type="entry name" value="TOBE_2"/>
    <property type="match status" value="1"/>
</dbReference>
<dbReference type="SMART" id="SM00382">
    <property type="entry name" value="AAA"/>
    <property type="match status" value="1"/>
</dbReference>
<dbReference type="SUPFAM" id="SSF50331">
    <property type="entry name" value="MOP-like"/>
    <property type="match status" value="1"/>
</dbReference>
<dbReference type="SUPFAM" id="SSF52540">
    <property type="entry name" value="P-loop containing nucleoside triphosphate hydrolases"/>
    <property type="match status" value="1"/>
</dbReference>
<dbReference type="PROSITE" id="PS00211">
    <property type="entry name" value="ABC_TRANSPORTER_1"/>
    <property type="match status" value="1"/>
</dbReference>
<dbReference type="PROSITE" id="PS50893">
    <property type="entry name" value="ABC_TRANSPORTER_2"/>
    <property type="match status" value="1"/>
</dbReference>
<dbReference type="PROSITE" id="PS51305">
    <property type="entry name" value="POTA"/>
    <property type="match status" value="1"/>
</dbReference>
<comment type="function">
    <text evidence="1">Part of the ABC transporter complex PotABCD involved in spermidine/putrescine import. Responsible for energy coupling to the transport system.</text>
</comment>
<comment type="catalytic activity">
    <reaction evidence="1">
        <text>ATP + H2O + polyamine-[polyamine-binding protein]Side 1 = ADP + phosphate + polyamineSide 2 + [polyamine-binding protein]Side 1.</text>
        <dbReference type="EC" id="7.6.2.11"/>
    </reaction>
</comment>
<comment type="subunit">
    <text evidence="1">The complex is composed of two ATP-binding proteins (PotA), two transmembrane proteins (PotB and PotC) and a solute-binding protein (PotD).</text>
</comment>
<comment type="subcellular location">
    <subcellularLocation>
        <location evidence="1">Cell inner membrane</location>
        <topology evidence="1">Peripheral membrane protein</topology>
    </subcellularLocation>
</comment>
<comment type="similarity">
    <text evidence="1">Belongs to the ABC transporter superfamily. Spermidine/putrescine importer (TC 3.A.1.11.1) family.</text>
</comment>
<comment type="sequence caution" evidence="2">
    <conflict type="frameshift">
        <sequence resource="EMBL" id="M62725"/>
    </conflict>
</comment>
<name>POTA_SALTY</name>
<protein>
    <recommendedName>
        <fullName evidence="1">Spermidine/putrescine import ATP-binding protein PotA</fullName>
        <ecNumber evidence="1">7.6.2.11</ecNumber>
    </recommendedName>
</protein>
<accession>P40790</accession>
<reference key="1">
    <citation type="journal article" date="2001" name="Nature">
        <title>Complete genome sequence of Salmonella enterica serovar Typhimurium LT2.</title>
        <authorList>
            <person name="McClelland M."/>
            <person name="Sanderson K.E."/>
            <person name="Spieth J."/>
            <person name="Clifton S.W."/>
            <person name="Latreille P."/>
            <person name="Courtney L."/>
            <person name="Porwollik S."/>
            <person name="Ali J."/>
            <person name="Dante M."/>
            <person name="Du F."/>
            <person name="Hou S."/>
            <person name="Layman D."/>
            <person name="Leonard S."/>
            <person name="Nguyen C."/>
            <person name="Scott K."/>
            <person name="Holmes A."/>
            <person name="Grewal N."/>
            <person name="Mulvaney E."/>
            <person name="Ryan E."/>
            <person name="Sun H."/>
            <person name="Florea L."/>
            <person name="Miller W."/>
            <person name="Stoneking T."/>
            <person name="Nhan M."/>
            <person name="Waterston R."/>
            <person name="Wilson R.K."/>
        </authorList>
    </citation>
    <scope>NUCLEOTIDE SEQUENCE [LARGE SCALE GENOMIC DNA]</scope>
    <source>
        <strain>LT2 / SGSC1412 / ATCC 700720</strain>
    </source>
</reference>
<reference key="2">
    <citation type="journal article" date="1991" name="J. Bacteriol.">
        <title>Cloning and nucleotide sequence of the anaerobically regulated pepT gene of Salmonella typhimurium.</title>
        <authorList>
            <person name="Miller C.G."/>
            <person name="Miller J.L."/>
            <person name="Bagga D.A."/>
        </authorList>
    </citation>
    <scope>NUCLEOTIDE SEQUENCE [GENOMIC DNA] OF 1-63</scope>
</reference>
<feature type="chain" id="PRO_0000092752" description="Spermidine/putrescine import ATP-binding protein PotA">
    <location>
        <begin position="1"/>
        <end position="378"/>
    </location>
</feature>
<feature type="domain" description="ABC transporter" evidence="1">
    <location>
        <begin position="18"/>
        <end position="248"/>
    </location>
</feature>
<feature type="binding site" evidence="1">
    <location>
        <begin position="50"/>
        <end position="57"/>
    </location>
    <ligand>
        <name>ATP</name>
        <dbReference type="ChEBI" id="CHEBI:30616"/>
    </ligand>
</feature>
<keyword id="KW-0067">ATP-binding</keyword>
<keyword id="KW-0997">Cell inner membrane</keyword>
<keyword id="KW-1003">Cell membrane</keyword>
<keyword id="KW-0472">Membrane</keyword>
<keyword id="KW-0547">Nucleotide-binding</keyword>
<keyword id="KW-1185">Reference proteome</keyword>
<keyword id="KW-1278">Translocase</keyword>
<keyword id="KW-0813">Transport</keyword>
<sequence length="378" mass="42840">MGQSKKLNNQPRSLSPLVLLSGISKSFDGKEVISQLDLTINNGEFLTLLGPSGCGKTTVLRLIAGLETVDAGHIMLDNQDITHVPAENRYVNTVFQSYALFPHMTVFENVAFGLRMQKTPAAEIAPRVTDALRMVQLEEFAQRKPHQLSGGQQQRVAIARAVVNKPRLLLLDESLSALDYKLRKQMQNELKALQRKLGITFVFVTHDQEEALTMSDRIVVMRNGVIEQDGTPREIYEEPKNLFVAGFIGEINRFDATVIERLDEQRVRASVEGRECNIYVNFAVEPGQKLNVLLRPEDLRVEEINDDNHIEGLIGYVRERNYKGMTLESVVELENGKMVMVSEFFNEDDPDFDHSLDQKMAISWVESWEVVLADEEHK</sequence>
<evidence type="ECO:0000255" key="1">
    <source>
        <dbReference type="HAMAP-Rule" id="MF_01726"/>
    </source>
</evidence>
<evidence type="ECO:0000305" key="2"/>